<evidence type="ECO:0000255" key="1">
    <source>
        <dbReference type="PROSITE-ProRule" id="PRU00080"/>
    </source>
</evidence>
<evidence type="ECO:0000305" key="2"/>
<proteinExistence type="evidence at transcript level"/>
<comment type="sequence caution" evidence="2">
    <conflict type="erroneous gene model prediction">
        <sequence resource="EMBL-CDS" id="CAB10177"/>
    </conflict>
    <text>The predicted gene At4g13980 has been split into 2 genes: At4g13980 and At4g13985.</text>
</comment>
<comment type="sequence caution" evidence="2">
    <conflict type="erroneous gene model prediction">
        <sequence resource="EMBL-CDS" id="CAB78440"/>
    </conflict>
    <text>The predicted gene At4g13980 has been split into 2 genes: At4g13980 and At4g13985.</text>
</comment>
<organism>
    <name type="scientific">Arabidopsis thaliana</name>
    <name type="common">Mouse-ear cress</name>
    <dbReference type="NCBI Taxonomy" id="3702"/>
    <lineage>
        <taxon>Eukaryota</taxon>
        <taxon>Viridiplantae</taxon>
        <taxon>Streptophyta</taxon>
        <taxon>Embryophyta</taxon>
        <taxon>Tracheophyta</taxon>
        <taxon>Spermatophyta</taxon>
        <taxon>Magnoliopsida</taxon>
        <taxon>eudicotyledons</taxon>
        <taxon>Gunneridae</taxon>
        <taxon>Pentapetalae</taxon>
        <taxon>rosids</taxon>
        <taxon>malvids</taxon>
        <taxon>Brassicales</taxon>
        <taxon>Brassicaceae</taxon>
        <taxon>Camelineae</taxon>
        <taxon>Arabidopsis</taxon>
    </lineage>
</organism>
<accession>Q4PSI6</accession>
<accession>O23259</accession>
<sequence>MEEDRESRVSAKPSGDRVDRLRNLPDCLLFKILLNLPTKDVVKLSVLSRRWRNVWRYVPGLDLECGDFMVREYYDSSEFNALLGFVYRFLGFNSESCLQKFKLTVNWYDDVQLETVHFTEWFNAVVKRKVQHLHILDKTWGRDEVVIPPTVFTCGSLISLNLYDVYLPNREFVSLPSLKVIVLDAVVFDEDFAFEMLVSGCPVLESLSVNKINLNDISESVQVSSQSLLSFSYVADDDDYLEVVIDAPRLHYLKLNDKRTASFIMKNHGSLLKADIDFVFNLGSEYMFDPNYLPTRHIIRDFLVGLSGVKDMIISSSTLQVIYDYSRCEQLPLFRNVSFLRVEFADYRWEMLPIFLESCPNLKSLVLGFSIPPGKEGANILPGPRRFLTSLEYVKIAKPMAAEASEIKLKLVSYFLENSTILKKLTLCLRNFREKEESVIVKKLLTIPRLSPSCQVFVL</sequence>
<protein>
    <recommendedName>
        <fullName>FBD-associated F-box protein At4g13985</fullName>
    </recommendedName>
</protein>
<name>FBD13_ARATH</name>
<reference key="1">
    <citation type="journal article" date="1998" name="Nature">
        <title>Analysis of 1.9 Mb of contiguous sequence from chromosome 4 of Arabidopsis thaliana.</title>
        <authorList>
            <person name="Bevan M."/>
            <person name="Bancroft I."/>
            <person name="Bent E."/>
            <person name="Love K."/>
            <person name="Goodman H.M."/>
            <person name="Dean C."/>
            <person name="Bergkamp R."/>
            <person name="Dirkse W."/>
            <person name="van Staveren M."/>
            <person name="Stiekema W."/>
            <person name="Drost L."/>
            <person name="Ridley P."/>
            <person name="Hudson S.-A."/>
            <person name="Patel K."/>
            <person name="Murphy G."/>
            <person name="Piffanelli P."/>
            <person name="Wedler H."/>
            <person name="Wedler E."/>
            <person name="Wambutt R."/>
            <person name="Weitzenegger T."/>
            <person name="Pohl T."/>
            <person name="Terryn N."/>
            <person name="Gielen J."/>
            <person name="Villarroel R."/>
            <person name="De Clercq R."/>
            <person name="van Montagu M."/>
            <person name="Lecharny A."/>
            <person name="Aubourg S."/>
            <person name="Gy I."/>
            <person name="Kreis M."/>
            <person name="Lao N."/>
            <person name="Kavanagh T."/>
            <person name="Hempel S."/>
            <person name="Kotter P."/>
            <person name="Entian K.-D."/>
            <person name="Rieger M."/>
            <person name="Schaefer M."/>
            <person name="Funk B."/>
            <person name="Mueller-Auer S."/>
            <person name="Silvey M."/>
            <person name="James R."/>
            <person name="Monfort A."/>
            <person name="Pons A."/>
            <person name="Puigdomenech P."/>
            <person name="Douka A."/>
            <person name="Voukelatou E."/>
            <person name="Milioni D."/>
            <person name="Hatzopoulos P."/>
            <person name="Piravandi E."/>
            <person name="Obermaier B."/>
            <person name="Hilbert H."/>
            <person name="Duesterhoeft A."/>
            <person name="Moores T."/>
            <person name="Jones J.D.G."/>
            <person name="Eneva T."/>
            <person name="Palme K."/>
            <person name="Benes V."/>
            <person name="Rechmann S."/>
            <person name="Ansorge W."/>
            <person name="Cooke R."/>
            <person name="Berger C."/>
            <person name="Delseny M."/>
            <person name="Voet M."/>
            <person name="Volckaert G."/>
            <person name="Mewes H.-W."/>
            <person name="Klosterman S."/>
            <person name="Schueller C."/>
            <person name="Chalwatzis N."/>
        </authorList>
    </citation>
    <scope>NUCLEOTIDE SEQUENCE [LARGE SCALE GENOMIC DNA]</scope>
    <source>
        <strain>cv. Columbia</strain>
    </source>
</reference>
<reference key="2">
    <citation type="journal article" date="1999" name="Nature">
        <title>Sequence and analysis of chromosome 4 of the plant Arabidopsis thaliana.</title>
        <authorList>
            <person name="Mayer K.F.X."/>
            <person name="Schueller C."/>
            <person name="Wambutt R."/>
            <person name="Murphy G."/>
            <person name="Volckaert G."/>
            <person name="Pohl T."/>
            <person name="Duesterhoeft A."/>
            <person name="Stiekema W."/>
            <person name="Entian K.-D."/>
            <person name="Terryn N."/>
            <person name="Harris B."/>
            <person name="Ansorge W."/>
            <person name="Brandt P."/>
            <person name="Grivell L.A."/>
            <person name="Rieger M."/>
            <person name="Weichselgartner M."/>
            <person name="de Simone V."/>
            <person name="Obermaier B."/>
            <person name="Mache R."/>
            <person name="Mueller M."/>
            <person name="Kreis M."/>
            <person name="Delseny M."/>
            <person name="Puigdomenech P."/>
            <person name="Watson M."/>
            <person name="Schmidtheini T."/>
            <person name="Reichert B."/>
            <person name="Portetelle D."/>
            <person name="Perez-Alonso M."/>
            <person name="Boutry M."/>
            <person name="Bancroft I."/>
            <person name="Vos P."/>
            <person name="Hoheisel J."/>
            <person name="Zimmermann W."/>
            <person name="Wedler H."/>
            <person name="Ridley P."/>
            <person name="Langham S.-A."/>
            <person name="McCullagh B."/>
            <person name="Bilham L."/>
            <person name="Robben J."/>
            <person name="van der Schueren J."/>
            <person name="Grymonprez B."/>
            <person name="Chuang Y.-J."/>
            <person name="Vandenbussche F."/>
            <person name="Braeken M."/>
            <person name="Weltjens I."/>
            <person name="Voet M."/>
            <person name="Bastiaens I."/>
            <person name="Aert R."/>
            <person name="Defoor E."/>
            <person name="Weitzenegger T."/>
            <person name="Bothe G."/>
            <person name="Ramsperger U."/>
            <person name="Hilbert H."/>
            <person name="Braun M."/>
            <person name="Holzer E."/>
            <person name="Brandt A."/>
            <person name="Peters S."/>
            <person name="van Staveren M."/>
            <person name="Dirkse W."/>
            <person name="Mooijman P."/>
            <person name="Klein Lankhorst R."/>
            <person name="Rose M."/>
            <person name="Hauf J."/>
            <person name="Koetter P."/>
            <person name="Berneiser S."/>
            <person name="Hempel S."/>
            <person name="Feldpausch M."/>
            <person name="Lamberth S."/>
            <person name="Van den Daele H."/>
            <person name="De Keyser A."/>
            <person name="Buysshaert C."/>
            <person name="Gielen J."/>
            <person name="Villarroel R."/>
            <person name="De Clercq R."/>
            <person name="van Montagu M."/>
            <person name="Rogers J."/>
            <person name="Cronin A."/>
            <person name="Quail M.A."/>
            <person name="Bray-Allen S."/>
            <person name="Clark L."/>
            <person name="Doggett J."/>
            <person name="Hall S."/>
            <person name="Kay M."/>
            <person name="Lennard N."/>
            <person name="McLay K."/>
            <person name="Mayes R."/>
            <person name="Pettett A."/>
            <person name="Rajandream M.A."/>
            <person name="Lyne M."/>
            <person name="Benes V."/>
            <person name="Rechmann S."/>
            <person name="Borkova D."/>
            <person name="Bloecker H."/>
            <person name="Scharfe M."/>
            <person name="Grimm M."/>
            <person name="Loehnert T.-H."/>
            <person name="Dose S."/>
            <person name="de Haan M."/>
            <person name="Maarse A.C."/>
            <person name="Schaefer M."/>
            <person name="Mueller-Auer S."/>
            <person name="Gabel C."/>
            <person name="Fuchs M."/>
            <person name="Fartmann B."/>
            <person name="Granderath K."/>
            <person name="Dauner D."/>
            <person name="Herzl A."/>
            <person name="Neumann S."/>
            <person name="Argiriou A."/>
            <person name="Vitale D."/>
            <person name="Liguori R."/>
            <person name="Piravandi E."/>
            <person name="Massenet O."/>
            <person name="Quigley F."/>
            <person name="Clabauld G."/>
            <person name="Muendlein A."/>
            <person name="Felber R."/>
            <person name="Schnabl S."/>
            <person name="Hiller R."/>
            <person name="Schmidt W."/>
            <person name="Lecharny A."/>
            <person name="Aubourg S."/>
            <person name="Chefdor F."/>
            <person name="Cooke R."/>
            <person name="Berger C."/>
            <person name="Monfort A."/>
            <person name="Casacuberta E."/>
            <person name="Gibbons T."/>
            <person name="Weber N."/>
            <person name="Vandenbol M."/>
            <person name="Bargues M."/>
            <person name="Terol J."/>
            <person name="Torres A."/>
            <person name="Perez-Perez A."/>
            <person name="Purnelle B."/>
            <person name="Bent E."/>
            <person name="Johnson S."/>
            <person name="Tacon D."/>
            <person name="Jesse T."/>
            <person name="Heijnen L."/>
            <person name="Schwarz S."/>
            <person name="Scholler P."/>
            <person name="Heber S."/>
            <person name="Francs P."/>
            <person name="Bielke C."/>
            <person name="Frishman D."/>
            <person name="Haase D."/>
            <person name="Lemcke K."/>
            <person name="Mewes H.-W."/>
            <person name="Stocker S."/>
            <person name="Zaccaria P."/>
            <person name="Bevan M."/>
            <person name="Wilson R.K."/>
            <person name="de la Bastide M."/>
            <person name="Habermann K."/>
            <person name="Parnell L."/>
            <person name="Dedhia N."/>
            <person name="Gnoj L."/>
            <person name="Schutz K."/>
            <person name="Huang E."/>
            <person name="Spiegel L."/>
            <person name="Sekhon M."/>
            <person name="Murray J."/>
            <person name="Sheet P."/>
            <person name="Cordes M."/>
            <person name="Abu-Threideh J."/>
            <person name="Stoneking T."/>
            <person name="Kalicki J."/>
            <person name="Graves T."/>
            <person name="Harmon G."/>
            <person name="Edwards J."/>
            <person name="Latreille P."/>
            <person name="Courtney L."/>
            <person name="Cloud J."/>
            <person name="Abbott A."/>
            <person name="Scott K."/>
            <person name="Johnson D."/>
            <person name="Minx P."/>
            <person name="Bentley D."/>
            <person name="Fulton B."/>
            <person name="Miller N."/>
            <person name="Greco T."/>
            <person name="Kemp K."/>
            <person name="Kramer J."/>
            <person name="Fulton L."/>
            <person name="Mardis E."/>
            <person name="Dante M."/>
            <person name="Pepin K."/>
            <person name="Hillier L.W."/>
            <person name="Nelson J."/>
            <person name="Spieth J."/>
            <person name="Ryan E."/>
            <person name="Andrews S."/>
            <person name="Geisel C."/>
            <person name="Layman D."/>
            <person name="Du H."/>
            <person name="Ali J."/>
            <person name="Berghoff A."/>
            <person name="Jones K."/>
            <person name="Drone K."/>
            <person name="Cotton M."/>
            <person name="Joshu C."/>
            <person name="Antonoiu B."/>
            <person name="Zidanic M."/>
            <person name="Strong C."/>
            <person name="Sun H."/>
            <person name="Lamar B."/>
            <person name="Yordan C."/>
            <person name="Ma P."/>
            <person name="Zhong J."/>
            <person name="Preston R."/>
            <person name="Vil D."/>
            <person name="Shekher M."/>
            <person name="Matero A."/>
            <person name="Shah R."/>
            <person name="Swaby I.K."/>
            <person name="O'Shaughnessy A."/>
            <person name="Rodriguez M."/>
            <person name="Hoffman J."/>
            <person name="Till S."/>
            <person name="Granat S."/>
            <person name="Shohdy N."/>
            <person name="Hasegawa A."/>
            <person name="Hameed A."/>
            <person name="Lodhi M."/>
            <person name="Johnson A."/>
            <person name="Chen E."/>
            <person name="Marra M.A."/>
            <person name="Martienssen R."/>
            <person name="McCombie W.R."/>
        </authorList>
    </citation>
    <scope>NUCLEOTIDE SEQUENCE [LARGE SCALE GENOMIC DNA]</scope>
    <source>
        <strain>cv. Columbia</strain>
    </source>
</reference>
<reference key="3">
    <citation type="journal article" date="2017" name="Plant J.">
        <title>Araport11: a complete reannotation of the Arabidopsis thaliana reference genome.</title>
        <authorList>
            <person name="Cheng C.Y."/>
            <person name="Krishnakumar V."/>
            <person name="Chan A.P."/>
            <person name="Thibaud-Nissen F."/>
            <person name="Schobel S."/>
            <person name="Town C.D."/>
        </authorList>
    </citation>
    <scope>GENOME REANNOTATION</scope>
    <source>
        <strain>cv. Columbia</strain>
    </source>
</reference>
<reference key="4">
    <citation type="submission" date="2005-05" db="EMBL/GenBank/DDBJ databases">
        <authorList>
            <person name="Underwood B.A."/>
            <person name="Xiao Y.-L."/>
            <person name="Moskal W.A. Jr."/>
            <person name="Monaghan E.L."/>
            <person name="Wang W."/>
            <person name="Redman J.C."/>
            <person name="Wu H.C."/>
            <person name="Utterback T."/>
            <person name="Town C.D."/>
        </authorList>
    </citation>
    <scope>NUCLEOTIDE SEQUENCE [LARGE SCALE MRNA]</scope>
    <source>
        <strain>cv. Columbia</strain>
    </source>
</reference>
<keyword id="KW-1185">Reference proteome</keyword>
<dbReference type="EMBL" id="Z97335">
    <property type="protein sequence ID" value="CAB10177.1"/>
    <property type="status" value="ALT_SEQ"/>
    <property type="molecule type" value="Genomic_DNA"/>
</dbReference>
<dbReference type="EMBL" id="AL161537">
    <property type="protein sequence ID" value="CAB78440.1"/>
    <property type="status" value="ALT_SEQ"/>
    <property type="molecule type" value="Genomic_DNA"/>
</dbReference>
<dbReference type="EMBL" id="CP002687">
    <property type="protein sequence ID" value="AEE83356.1"/>
    <property type="molecule type" value="Genomic_DNA"/>
</dbReference>
<dbReference type="EMBL" id="DQ056650">
    <property type="protein sequence ID" value="AAY78797.1"/>
    <property type="molecule type" value="mRNA"/>
</dbReference>
<dbReference type="PIR" id="G71400">
    <property type="entry name" value="G71400"/>
</dbReference>
<dbReference type="FunCoup" id="Q4PSI6">
    <property type="interactions" value="5"/>
</dbReference>
<dbReference type="STRING" id="3702.Q4PSI6"/>
<dbReference type="iPTMnet" id="Q4PSI6"/>
<dbReference type="PaxDb" id="3702-AT4G13985.1"/>
<dbReference type="ProteomicsDB" id="230749"/>
<dbReference type="EnsemblPlants" id="AT4G13985.1">
    <property type="protein sequence ID" value="AT4G13985.1"/>
    <property type="gene ID" value="AT4G13985"/>
</dbReference>
<dbReference type="Gramene" id="AT4G13985.1">
    <property type="protein sequence ID" value="AT4G13985.1"/>
    <property type="gene ID" value="AT4G13985"/>
</dbReference>
<dbReference type="KEGG" id="ath:AT4G13985"/>
<dbReference type="Araport" id="AT4G13985"/>
<dbReference type="TAIR" id="AT4G13985">
    <property type="gene designation" value="FBD1"/>
</dbReference>
<dbReference type="HOGENOM" id="CLU_010721_1_3_1"/>
<dbReference type="InParanoid" id="Q4PSI6"/>
<dbReference type="OMA" id="INTHRDN"/>
<dbReference type="OrthoDB" id="1035840at2759"/>
<dbReference type="PhylomeDB" id="Q4PSI6"/>
<dbReference type="PRO" id="PR:Q4PSI6"/>
<dbReference type="Proteomes" id="UP000006548">
    <property type="component" value="Chromosome 4"/>
</dbReference>
<dbReference type="ExpressionAtlas" id="Q4PSI6">
    <property type="expression patterns" value="baseline and differential"/>
</dbReference>
<dbReference type="CDD" id="cd22160">
    <property type="entry name" value="F-box_AtFBL13-like"/>
    <property type="match status" value="1"/>
</dbReference>
<dbReference type="Gene3D" id="1.20.1280.50">
    <property type="match status" value="1"/>
</dbReference>
<dbReference type="Gene3D" id="3.80.10.10">
    <property type="entry name" value="Ribonuclease Inhibitor"/>
    <property type="match status" value="1"/>
</dbReference>
<dbReference type="InterPro" id="IPR036047">
    <property type="entry name" value="F-box-like_dom_sf"/>
</dbReference>
<dbReference type="InterPro" id="IPR053781">
    <property type="entry name" value="F-box_AtFBL13-like"/>
</dbReference>
<dbReference type="InterPro" id="IPR001810">
    <property type="entry name" value="F-box_dom"/>
</dbReference>
<dbReference type="InterPro" id="IPR006566">
    <property type="entry name" value="FBD"/>
</dbReference>
<dbReference type="InterPro" id="IPR050232">
    <property type="entry name" value="FBL13/AtMIF1-like"/>
</dbReference>
<dbReference type="InterPro" id="IPR032675">
    <property type="entry name" value="LRR_dom_sf"/>
</dbReference>
<dbReference type="InterPro" id="IPR055411">
    <property type="entry name" value="LRR_FXL15/At3g58940/PEG3-like"/>
</dbReference>
<dbReference type="PANTHER" id="PTHR31900">
    <property type="entry name" value="F-BOX/RNI SUPERFAMILY PROTEIN-RELATED"/>
    <property type="match status" value="1"/>
</dbReference>
<dbReference type="PANTHER" id="PTHR31900:SF33">
    <property type="entry name" value="PROTEIN WITH RNI-LIKE_FBD-LIKE DOMAIN"/>
    <property type="match status" value="1"/>
</dbReference>
<dbReference type="Pfam" id="PF00646">
    <property type="entry name" value="F-box"/>
    <property type="match status" value="1"/>
</dbReference>
<dbReference type="Pfam" id="PF08387">
    <property type="entry name" value="FBD"/>
    <property type="match status" value="1"/>
</dbReference>
<dbReference type="Pfam" id="PF24758">
    <property type="entry name" value="LRR_At5g56370"/>
    <property type="match status" value="1"/>
</dbReference>
<dbReference type="SMART" id="SM00579">
    <property type="entry name" value="FBD"/>
    <property type="match status" value="1"/>
</dbReference>
<dbReference type="SMART" id="SM00256">
    <property type="entry name" value="FBOX"/>
    <property type="match status" value="1"/>
</dbReference>
<dbReference type="SUPFAM" id="SSF81383">
    <property type="entry name" value="F-box domain"/>
    <property type="match status" value="1"/>
</dbReference>
<dbReference type="SUPFAM" id="SSF52047">
    <property type="entry name" value="RNI-like"/>
    <property type="match status" value="1"/>
</dbReference>
<dbReference type="PROSITE" id="PS50181">
    <property type="entry name" value="FBOX"/>
    <property type="match status" value="1"/>
</dbReference>
<feature type="chain" id="PRO_0000270841" description="FBD-associated F-box protein At4g13985">
    <location>
        <begin position="1"/>
        <end position="459"/>
    </location>
</feature>
<feature type="domain" description="F-box" evidence="1">
    <location>
        <begin position="18"/>
        <end position="64"/>
    </location>
</feature>
<feature type="domain" description="FBD">
    <location>
        <begin position="375"/>
        <end position="429"/>
    </location>
</feature>
<gene>
    <name type="ordered locus">At4g13985</name>
    <name type="ORF">dl3030c</name>
    <name type="ORF">FCAALL.27</name>
</gene>